<organism>
    <name type="scientific">Schizosaccharomyces pombe (strain 972 / ATCC 24843)</name>
    <name type="common">Fission yeast</name>
    <dbReference type="NCBI Taxonomy" id="284812"/>
    <lineage>
        <taxon>Eukaryota</taxon>
        <taxon>Fungi</taxon>
        <taxon>Dikarya</taxon>
        <taxon>Ascomycota</taxon>
        <taxon>Taphrinomycotina</taxon>
        <taxon>Schizosaccharomycetes</taxon>
        <taxon>Schizosaccharomycetales</taxon>
        <taxon>Schizosaccharomycetaceae</taxon>
        <taxon>Schizosaccharomyces</taxon>
    </lineage>
</organism>
<evidence type="ECO:0000250" key="1">
    <source>
        <dbReference type="UniProtKB" id="P53104"/>
    </source>
</evidence>
<evidence type="ECO:0000255" key="2">
    <source>
        <dbReference type="PROSITE-ProRule" id="PRU00159"/>
    </source>
</evidence>
<evidence type="ECO:0000255" key="3">
    <source>
        <dbReference type="PROSITE-ProRule" id="PRU10027"/>
    </source>
</evidence>
<evidence type="ECO:0000256" key="4">
    <source>
        <dbReference type="SAM" id="MobiDB-lite"/>
    </source>
</evidence>
<evidence type="ECO:0000269" key="5">
    <source>
    </source>
</evidence>
<evidence type="ECO:0000269" key="6">
    <source>
    </source>
</evidence>
<evidence type="ECO:0000269" key="7">
    <source>
    </source>
</evidence>
<evidence type="ECO:0000269" key="8">
    <source>
    </source>
</evidence>
<evidence type="ECO:0000269" key="9">
    <source>
    </source>
</evidence>
<evidence type="ECO:0000305" key="10"/>
<evidence type="ECO:0000312" key="11">
    <source>
        <dbReference type="PomBase" id="SPCC63.08c"/>
    </source>
</evidence>
<feature type="chain" id="PRO_0000085652" description="Serine/threonine-protein kinase atg1">
    <location>
        <begin position="1"/>
        <end position="830"/>
    </location>
</feature>
<feature type="domain" description="Protein kinase" evidence="2">
    <location>
        <begin position="14"/>
        <end position="307"/>
    </location>
</feature>
<feature type="region of interest" description="Disordered" evidence="4">
    <location>
        <begin position="448"/>
        <end position="480"/>
    </location>
</feature>
<feature type="compositionally biased region" description="Polar residues" evidence="4">
    <location>
        <begin position="448"/>
        <end position="468"/>
    </location>
</feature>
<feature type="active site" description="Proton acceptor" evidence="2 3">
    <location>
        <position position="157"/>
    </location>
</feature>
<feature type="binding site" evidence="2">
    <location>
        <begin position="20"/>
        <end position="28"/>
    </location>
    <ligand>
        <name>ATP</name>
        <dbReference type="ChEBI" id="CHEBI:30616"/>
    </ligand>
</feature>
<feature type="binding site" evidence="2">
    <location>
        <position position="43"/>
    </location>
    <ligand>
        <name>ATP</name>
        <dbReference type="ChEBI" id="CHEBI:30616"/>
    </ligand>
</feature>
<feature type="modified residue" description="Phosphoserine" evidence="6">
    <location>
        <position position="346"/>
    </location>
</feature>
<gene>
    <name evidence="11" type="primary">atg1</name>
    <name evidence="11" type="synonym">ppk36</name>
    <name evidence="11" type="ORF">SPCC63.08c</name>
</gene>
<sequence>MNLQTSTNQTIGPYVIRSEIGRGSFAIVYKGKHTETNRVISIKSVLTKKLTKKLLENLESEISILKEIRHVHVVELIDCIKAGRFIHLVMEYCSLGDLSYFIRKREKFNSIPSLAWINIDHPPVYKAGLNETLVRHFTQQLASALQFLRSRSLIHRDVKPQNLLLQPPPTAAYLEEHPQFVGSPKLPMLKLADFGFARYLQTSSMAETLCGSPLYMAPEILRYEKYDAKADLWSVGAVLYEMAVGKPPFKAPNHVELLRRIQKAKDVIKFPEEAFIHPDIKTLICALLKQNPADRIDYDGFFSSIVVTTPLDDASTLTGSDIQDAVKEINIPSSSPAYITDFFPKSNPGAPAPPGGLLRQAFQAQGSSIQPSEITGRRVPHRYAQDGNTLPYTPVFPPESAPAASIFPPRLTSKQPIPMASPAKLTSDTSNKSSAYVVVDHHPIISSTQLSNESLTHEQSINGNSPSPNEGVFQGSFSPESAPVNNHAFPHTSRMQIPYMKPNAFPSNPTYIASTPVTQLRRAFEQATAHVPQSGGGARNKSALERALNVANARLNEVVVDGMTDNGNTSLPTKESNLDNNVNIIQPSLPDTGKRLLDVLESIAMKSNSVYHLAEVKLAQIIPSLSDEMKPGDTLLDRPLTPFSLVMLAKESYVLYERDIELLQVAFDGVAAFWANSEERASPDCQQAIEWFRQRYSESLEKSQFLREIIISQSAAHSLPTTKPVSASQLIYHRALDLSRNAATSELSGNDAQACLQNYRLAAHLLESLLESNFSTPDGANDSNNSVTIRNLIALITKRQELLQSKQIQANVANKVTESVAKITLAPNLA</sequence>
<reference key="1">
    <citation type="journal article" date="2002" name="Nature">
        <title>The genome sequence of Schizosaccharomyces pombe.</title>
        <authorList>
            <person name="Wood V."/>
            <person name="Gwilliam R."/>
            <person name="Rajandream M.A."/>
            <person name="Lyne M.H."/>
            <person name="Lyne R."/>
            <person name="Stewart A."/>
            <person name="Sgouros J.G."/>
            <person name="Peat N."/>
            <person name="Hayles J."/>
            <person name="Baker S.G."/>
            <person name="Basham D."/>
            <person name="Bowman S."/>
            <person name="Brooks K."/>
            <person name="Brown D."/>
            <person name="Brown S."/>
            <person name="Chillingworth T."/>
            <person name="Churcher C.M."/>
            <person name="Collins M."/>
            <person name="Connor R."/>
            <person name="Cronin A."/>
            <person name="Davis P."/>
            <person name="Feltwell T."/>
            <person name="Fraser A."/>
            <person name="Gentles S."/>
            <person name="Goble A."/>
            <person name="Hamlin N."/>
            <person name="Harris D.E."/>
            <person name="Hidalgo J."/>
            <person name="Hodgson G."/>
            <person name="Holroyd S."/>
            <person name="Hornsby T."/>
            <person name="Howarth S."/>
            <person name="Huckle E.J."/>
            <person name="Hunt S."/>
            <person name="Jagels K."/>
            <person name="James K.D."/>
            <person name="Jones L."/>
            <person name="Jones M."/>
            <person name="Leather S."/>
            <person name="McDonald S."/>
            <person name="McLean J."/>
            <person name="Mooney P."/>
            <person name="Moule S."/>
            <person name="Mungall K.L."/>
            <person name="Murphy L.D."/>
            <person name="Niblett D."/>
            <person name="Odell C."/>
            <person name="Oliver K."/>
            <person name="O'Neil S."/>
            <person name="Pearson D."/>
            <person name="Quail M.A."/>
            <person name="Rabbinowitsch E."/>
            <person name="Rutherford K.M."/>
            <person name="Rutter S."/>
            <person name="Saunders D."/>
            <person name="Seeger K."/>
            <person name="Sharp S."/>
            <person name="Skelton J."/>
            <person name="Simmonds M.N."/>
            <person name="Squares R."/>
            <person name="Squares S."/>
            <person name="Stevens K."/>
            <person name="Taylor K."/>
            <person name="Taylor R.G."/>
            <person name="Tivey A."/>
            <person name="Walsh S.V."/>
            <person name="Warren T."/>
            <person name="Whitehead S."/>
            <person name="Woodward J.R."/>
            <person name="Volckaert G."/>
            <person name="Aert R."/>
            <person name="Robben J."/>
            <person name="Grymonprez B."/>
            <person name="Weltjens I."/>
            <person name="Vanstreels E."/>
            <person name="Rieger M."/>
            <person name="Schaefer M."/>
            <person name="Mueller-Auer S."/>
            <person name="Gabel C."/>
            <person name="Fuchs M."/>
            <person name="Duesterhoeft A."/>
            <person name="Fritzc C."/>
            <person name="Holzer E."/>
            <person name="Moestl D."/>
            <person name="Hilbert H."/>
            <person name="Borzym K."/>
            <person name="Langer I."/>
            <person name="Beck A."/>
            <person name="Lehrach H."/>
            <person name="Reinhardt R."/>
            <person name="Pohl T.M."/>
            <person name="Eger P."/>
            <person name="Zimmermann W."/>
            <person name="Wedler H."/>
            <person name="Wambutt R."/>
            <person name="Purnelle B."/>
            <person name="Goffeau A."/>
            <person name="Cadieu E."/>
            <person name="Dreano S."/>
            <person name="Gloux S."/>
            <person name="Lelaure V."/>
            <person name="Mottier S."/>
            <person name="Galibert F."/>
            <person name="Aves S.J."/>
            <person name="Xiang Z."/>
            <person name="Hunt C."/>
            <person name="Moore K."/>
            <person name="Hurst S.M."/>
            <person name="Lucas M."/>
            <person name="Rochet M."/>
            <person name="Gaillardin C."/>
            <person name="Tallada V.A."/>
            <person name="Garzon A."/>
            <person name="Thode G."/>
            <person name="Daga R.R."/>
            <person name="Cruzado L."/>
            <person name="Jimenez J."/>
            <person name="Sanchez M."/>
            <person name="del Rey F."/>
            <person name="Benito J."/>
            <person name="Dominguez A."/>
            <person name="Revuelta J.L."/>
            <person name="Moreno S."/>
            <person name="Armstrong J."/>
            <person name="Forsburg S.L."/>
            <person name="Cerutti L."/>
            <person name="Lowe T."/>
            <person name="McCombie W.R."/>
            <person name="Paulsen I."/>
            <person name="Potashkin J."/>
            <person name="Shpakovski G.V."/>
            <person name="Ussery D."/>
            <person name="Barrell B.G."/>
            <person name="Nurse P."/>
        </authorList>
    </citation>
    <scope>NUCLEOTIDE SEQUENCE [LARGE SCALE GENOMIC DNA]</scope>
    <source>
        <strain>972 / ATCC 24843</strain>
    </source>
</reference>
<reference key="2">
    <citation type="journal article" date="2005" name="Eukaryot. Cell">
        <title>Systematic deletion analysis of fission yeast protein kinases.</title>
        <authorList>
            <person name="Bimbo A."/>
            <person name="Jia Y."/>
            <person name="Poh S.L."/>
            <person name="Karuturi R.K.M."/>
            <person name="den Elzen N."/>
            <person name="Peng X."/>
            <person name="Zheng L."/>
            <person name="O'Connell M."/>
            <person name="Liu E.T."/>
            <person name="Balasubramanian M.K."/>
            <person name="Liu J."/>
        </authorList>
    </citation>
    <scope>IDENTIFICATION</scope>
</reference>
<reference key="3">
    <citation type="journal article" date="2006" name="Nat. Biotechnol.">
        <title>ORFeome cloning and global analysis of protein localization in the fission yeast Schizosaccharomyces pombe.</title>
        <authorList>
            <person name="Matsuyama A."/>
            <person name="Arai R."/>
            <person name="Yashiroda Y."/>
            <person name="Shirai A."/>
            <person name="Kamata A."/>
            <person name="Sekido S."/>
            <person name="Kobayashi Y."/>
            <person name="Hashimoto A."/>
            <person name="Hamamoto M."/>
            <person name="Hiraoka Y."/>
            <person name="Horinouchi S."/>
            <person name="Yoshida M."/>
        </authorList>
    </citation>
    <scope>SUBCELLULAR LOCATION [LARGE SCALE ANALYSIS]</scope>
</reference>
<reference key="4">
    <citation type="journal article" date="2007" name="Genes Cells">
        <title>Fission yeast autophagy induced by nitrogen starvation generates a nitrogen source that drives adaptation processes.</title>
        <authorList>
            <person name="Kohda T.A."/>
            <person name="Tanaka K."/>
            <person name="Konomi M."/>
            <person name="Sato M."/>
            <person name="Osumi M."/>
            <person name="Yamamoto M."/>
        </authorList>
    </citation>
    <scope>FUNCTION</scope>
    <scope>PHOSPHORYLATION</scope>
    <scope>DEPHOSPHORYLATION</scope>
</reference>
<reference key="5">
    <citation type="journal article" date="2008" name="J. Proteome Res.">
        <title>Phosphoproteome analysis of fission yeast.</title>
        <authorList>
            <person name="Wilson-Grady J.T."/>
            <person name="Villen J."/>
            <person name="Gygi S.P."/>
        </authorList>
    </citation>
    <scope>PHOSPHORYLATION [LARGE SCALE ANALYSIS] AT SER-346</scope>
    <scope>IDENTIFICATION BY MASS SPECTROMETRY</scope>
</reference>
<reference key="6">
    <citation type="journal article" date="2009" name="Microbiology">
        <title>Autophagy-deficient Schizosaccharomyces pombe mutants undergo partial sporulation during nitrogen starvation.</title>
        <authorList>
            <person name="Mukaiyama H."/>
            <person name="Kajiwara S."/>
            <person name="Hosomi A."/>
            <person name="Giga-Hama Y."/>
            <person name="Tanaka N."/>
            <person name="Nakamura T."/>
            <person name="Takegawa K."/>
        </authorList>
    </citation>
    <scope>FUNCTION</scope>
</reference>
<reference key="7">
    <citation type="journal article" date="2013" name="PLoS Genet.">
        <title>Global analysis of fission yeast mating genes reveals new autophagy factors.</title>
        <authorList>
            <person name="Sun L.L."/>
            <person name="Li M."/>
            <person name="Suo F."/>
            <person name="Liu X.M."/>
            <person name="Shen E.Z."/>
            <person name="Yang B."/>
            <person name="Dong M.Q."/>
            <person name="He W.Z."/>
            <person name="Du L.L."/>
        </authorList>
    </citation>
    <scope>DISRUPTION PHENOTYPE</scope>
    <scope>SUBCELLULAR LOCATION</scope>
</reference>
<reference key="8">
    <citation type="journal article" date="2017" name="Autophagy">
        <title>Conserved and unique features of the fission yeast core Atg1 complex.</title>
        <authorList>
            <person name="Nanji T."/>
            <person name="Liu X."/>
            <person name="Chew L.H."/>
            <person name="Li F.K."/>
            <person name="Biswas M."/>
            <person name="Yu Z.Q."/>
            <person name="Lu S."/>
            <person name="Dong M.Q."/>
            <person name="Du L.L."/>
            <person name="Klionsky D.J."/>
            <person name="Yip C.K."/>
        </authorList>
    </citation>
    <scope>SUBUNIT</scope>
    <scope>INTERACTION WITH ATG13</scope>
</reference>
<protein>
    <recommendedName>
        <fullName evidence="11">Serine/threonine-protein kinase atg1</fullName>
        <ecNumber evidence="1">2.7.11.1</ecNumber>
    </recommendedName>
    <alternativeName>
        <fullName evidence="1">Autophagy-related protein 1</fullName>
    </alternativeName>
    <alternativeName>
        <fullName evidence="10">Serine/threonine-protein kinase ppk36</fullName>
    </alternativeName>
</protein>
<proteinExistence type="evidence at protein level"/>
<keyword id="KW-0067">ATP-binding</keyword>
<keyword id="KW-0072">Autophagy</keyword>
<keyword id="KW-0418">Kinase</keyword>
<keyword id="KW-0547">Nucleotide-binding</keyword>
<keyword id="KW-0597">Phosphoprotein</keyword>
<keyword id="KW-0653">Protein transport</keyword>
<keyword id="KW-1185">Reference proteome</keyword>
<keyword id="KW-0723">Serine/threonine-protein kinase</keyword>
<keyword id="KW-0808">Transferase</keyword>
<keyword id="KW-0813">Transport</keyword>
<accession>Q9Y7T4</accession>
<comment type="function">
    <text evidence="1 5 7">Serine/threonine protein kinase involved in the cytoplasm to vacuole transport (Cvt) and found to be essential in autophagy, where it is required for the formation of autophagosomes. Involved in the clearance of protein aggregates which cannot be efficiently cleared by the proteasome. Required for selective autophagic degradation of the nucleus (nucleophagy) as well as for mitophagy which contributes to regulate mitochondrial quantity and quality by eliminating the mitochondria to a basal level to fulfill cellular energy requirements and preventing excess ROS production. Also involved in endoplasmic reticulum-specific autophagic process, in selective removal of ER-associated degradation (ERAD) substrates. Plays a key role in ATG9 and ATG23 cycling through the pre-autophagosomal structure and is necessary to promote ATG18 binding to ATG9 through phosphorylation of ATG9. Catalyzes phosphorylation of ATG4, decreasing the interaction between ATG4 and ATG8 and impairing deconjugation of PE-conjugated forms of ATG8 (By similarity). Autophagy functions to supply nitrogen and is activated when cells cannot access exogenous nitrogen, thus ensuring that they can adapt and subsequently propagate (PubMed:17295836, PubMed:19778961). Finally, atg13 is also required for glycogen storage during stationary phase and has a role in meiosis and sporulation (PubMed:17295836, PubMed:19778961).</text>
</comment>
<comment type="catalytic activity">
    <reaction evidence="1">
        <text>L-seryl-[protein] + ATP = O-phospho-L-seryl-[protein] + ADP + H(+)</text>
        <dbReference type="Rhea" id="RHEA:17989"/>
        <dbReference type="Rhea" id="RHEA-COMP:9863"/>
        <dbReference type="Rhea" id="RHEA-COMP:11604"/>
        <dbReference type="ChEBI" id="CHEBI:15378"/>
        <dbReference type="ChEBI" id="CHEBI:29999"/>
        <dbReference type="ChEBI" id="CHEBI:30616"/>
        <dbReference type="ChEBI" id="CHEBI:83421"/>
        <dbReference type="ChEBI" id="CHEBI:456216"/>
        <dbReference type="EC" id="2.7.11.1"/>
    </reaction>
</comment>
<comment type="catalytic activity">
    <reaction evidence="1">
        <text>L-threonyl-[protein] + ATP = O-phospho-L-threonyl-[protein] + ADP + H(+)</text>
        <dbReference type="Rhea" id="RHEA:46608"/>
        <dbReference type="Rhea" id="RHEA-COMP:11060"/>
        <dbReference type="Rhea" id="RHEA-COMP:11605"/>
        <dbReference type="ChEBI" id="CHEBI:15378"/>
        <dbReference type="ChEBI" id="CHEBI:30013"/>
        <dbReference type="ChEBI" id="CHEBI:30616"/>
        <dbReference type="ChEBI" id="CHEBI:61977"/>
        <dbReference type="ChEBI" id="CHEBI:456216"/>
        <dbReference type="EC" id="2.7.11.1"/>
    </reaction>
</comment>
<comment type="subunit">
    <text evidence="1 9">Homodimer (By similarity). Component of the atg1 kinase complex composed of at least atg1, atg13, atg17 and atg101 (PubMed:28976798). Interacts directly with atg13 (PubMed:28976798).</text>
</comment>
<comment type="PTM">
    <text evidence="5">Phosphorylated (PubMed:17295836). Dephosphorylated under depletion of nitrogen (PubMed:17295836).</text>
</comment>
<comment type="disruption phenotype">
    <text evidence="8">Impairs atg8-processing.</text>
</comment>
<comment type="similarity">
    <text evidence="2">Belongs to the protein kinase superfamily. Ser/Thr protein kinase family. APG1/unc-51/ULK1 subfamily.</text>
</comment>
<name>ATG1_SCHPO</name>
<dbReference type="EC" id="2.7.11.1" evidence="1"/>
<dbReference type="EMBL" id="CU329672">
    <property type="protein sequence ID" value="CAB40012.1"/>
    <property type="molecule type" value="Genomic_DNA"/>
</dbReference>
<dbReference type="PIR" id="T41509">
    <property type="entry name" value="T41509"/>
</dbReference>
<dbReference type="RefSeq" id="NP_587982.1">
    <property type="nucleotide sequence ID" value="NM_001022973.2"/>
</dbReference>
<dbReference type="SMR" id="Q9Y7T4"/>
<dbReference type="BioGRID" id="276024">
    <property type="interactions" value="66"/>
</dbReference>
<dbReference type="ComplexPortal" id="CPX-25773">
    <property type="entry name" value="Atg1/ULK1 protein kinase complex"/>
</dbReference>
<dbReference type="FunCoup" id="Q9Y7T4">
    <property type="interactions" value="175"/>
</dbReference>
<dbReference type="STRING" id="284812.Q9Y7T4"/>
<dbReference type="iPTMnet" id="Q9Y7T4"/>
<dbReference type="PaxDb" id="4896-SPCC63.08c.1"/>
<dbReference type="EnsemblFungi" id="SPCC63.08c.1">
    <property type="protein sequence ID" value="SPCC63.08c.1:pep"/>
    <property type="gene ID" value="SPCC63.08c"/>
</dbReference>
<dbReference type="GeneID" id="2539461"/>
<dbReference type="KEGG" id="spo:2539461"/>
<dbReference type="PomBase" id="SPCC63.08c">
    <property type="gene designation" value="atg1"/>
</dbReference>
<dbReference type="VEuPathDB" id="FungiDB:SPCC63.08c"/>
<dbReference type="eggNOG" id="KOG0595">
    <property type="taxonomic scope" value="Eukaryota"/>
</dbReference>
<dbReference type="HOGENOM" id="CLU_006447_1_0_1"/>
<dbReference type="InParanoid" id="Q9Y7T4"/>
<dbReference type="OMA" id="EIRHVHV"/>
<dbReference type="PhylomeDB" id="Q9Y7T4"/>
<dbReference type="Reactome" id="R-SPO-1632852">
    <property type="pathway name" value="Macroautophagy"/>
</dbReference>
<dbReference type="Reactome" id="R-SPO-8876198">
    <property type="pathway name" value="RAB GEFs exchange GTP for GDP on RABs"/>
</dbReference>
<dbReference type="Reactome" id="R-SPO-8934903">
    <property type="pathway name" value="Receptor Mediated Mitophagy"/>
</dbReference>
<dbReference type="PRO" id="PR:Q9Y7T4"/>
<dbReference type="Proteomes" id="UP000002485">
    <property type="component" value="Chromosome III"/>
</dbReference>
<dbReference type="GO" id="GO:1990316">
    <property type="term" value="C:Atg1/ULK1 kinase complex"/>
    <property type="evidence" value="ECO:0000269"/>
    <property type="project" value="PomBase"/>
</dbReference>
<dbReference type="GO" id="GO:0005776">
    <property type="term" value="C:autophagosome"/>
    <property type="evidence" value="ECO:0000318"/>
    <property type="project" value="GO_Central"/>
</dbReference>
<dbReference type="GO" id="GO:0005737">
    <property type="term" value="C:cytoplasm"/>
    <property type="evidence" value="ECO:0000318"/>
    <property type="project" value="GO_Central"/>
</dbReference>
<dbReference type="GO" id="GO:0005829">
    <property type="term" value="C:cytosol"/>
    <property type="evidence" value="ECO:0007005"/>
    <property type="project" value="PomBase"/>
</dbReference>
<dbReference type="GO" id="GO:0000329">
    <property type="term" value="C:fungal-type vacuole membrane"/>
    <property type="evidence" value="ECO:0000314"/>
    <property type="project" value="PomBase"/>
</dbReference>
<dbReference type="GO" id="GO:0005634">
    <property type="term" value="C:nucleus"/>
    <property type="evidence" value="ECO:0007005"/>
    <property type="project" value="PomBase"/>
</dbReference>
<dbReference type="GO" id="GO:0000407">
    <property type="term" value="C:phagophore assembly site"/>
    <property type="evidence" value="ECO:0000314"/>
    <property type="project" value="PomBase"/>
</dbReference>
<dbReference type="GO" id="GO:0034045">
    <property type="term" value="C:phagophore assembly site membrane"/>
    <property type="evidence" value="ECO:0000318"/>
    <property type="project" value="GO_Central"/>
</dbReference>
<dbReference type="GO" id="GO:0005524">
    <property type="term" value="F:ATP binding"/>
    <property type="evidence" value="ECO:0000255"/>
    <property type="project" value="PomBase"/>
</dbReference>
<dbReference type="GO" id="GO:0106310">
    <property type="term" value="F:protein serine kinase activity"/>
    <property type="evidence" value="ECO:0007669"/>
    <property type="project" value="RHEA"/>
</dbReference>
<dbReference type="GO" id="GO:0004674">
    <property type="term" value="F:protein serine/threonine kinase activity"/>
    <property type="evidence" value="ECO:0000314"/>
    <property type="project" value="PomBase"/>
</dbReference>
<dbReference type="GO" id="GO:0000045">
    <property type="term" value="P:autophagosome assembly"/>
    <property type="evidence" value="ECO:0000318"/>
    <property type="project" value="GO_Central"/>
</dbReference>
<dbReference type="GO" id="GO:0016236">
    <property type="term" value="P:macroautophagy"/>
    <property type="evidence" value="ECO:0000315"/>
    <property type="project" value="PomBase"/>
</dbReference>
<dbReference type="GO" id="GO:0000423">
    <property type="term" value="P:mitophagy"/>
    <property type="evidence" value="ECO:0000315"/>
    <property type="project" value="PomBase"/>
</dbReference>
<dbReference type="GO" id="GO:0034727">
    <property type="term" value="P:piecemeal microautophagy of the nucleus"/>
    <property type="evidence" value="ECO:0000318"/>
    <property type="project" value="GO_Central"/>
</dbReference>
<dbReference type="GO" id="GO:0015031">
    <property type="term" value="P:protein transport"/>
    <property type="evidence" value="ECO:0007669"/>
    <property type="project" value="UniProtKB-KW"/>
</dbReference>
<dbReference type="GO" id="GO:0010506">
    <property type="term" value="P:regulation of autophagy"/>
    <property type="evidence" value="ECO:0000318"/>
    <property type="project" value="GO_Central"/>
</dbReference>
<dbReference type="GO" id="GO:0042594">
    <property type="term" value="P:response to starvation"/>
    <property type="evidence" value="ECO:0000318"/>
    <property type="project" value="GO_Central"/>
</dbReference>
<dbReference type="GO" id="GO:0061709">
    <property type="term" value="P:reticulophagy"/>
    <property type="evidence" value="ECO:0000318"/>
    <property type="project" value="GO_Central"/>
</dbReference>
<dbReference type="GO" id="GO:0023052">
    <property type="term" value="P:signaling"/>
    <property type="evidence" value="ECO:0000303"/>
    <property type="project" value="PomBase"/>
</dbReference>
<dbReference type="CDD" id="cd14009">
    <property type="entry name" value="STKc_ATG1_ULK_like"/>
    <property type="match status" value="1"/>
</dbReference>
<dbReference type="FunFam" id="1.10.510.10:FF:000817">
    <property type="entry name" value="Serine/threonine-protein kinase ATG1"/>
    <property type="match status" value="1"/>
</dbReference>
<dbReference type="Gene3D" id="1.10.510.10">
    <property type="entry name" value="Transferase(Phosphotransferase) domain 1"/>
    <property type="match status" value="1"/>
</dbReference>
<dbReference type="InterPro" id="IPR045269">
    <property type="entry name" value="Atg1-like"/>
</dbReference>
<dbReference type="InterPro" id="IPR048941">
    <property type="entry name" value="ATG1-like_MIT2"/>
</dbReference>
<dbReference type="InterPro" id="IPR022708">
    <property type="entry name" value="Atg1-like_tMIT"/>
</dbReference>
<dbReference type="InterPro" id="IPR011009">
    <property type="entry name" value="Kinase-like_dom_sf"/>
</dbReference>
<dbReference type="InterPro" id="IPR000719">
    <property type="entry name" value="Prot_kinase_dom"/>
</dbReference>
<dbReference type="InterPro" id="IPR008271">
    <property type="entry name" value="Ser/Thr_kinase_AS"/>
</dbReference>
<dbReference type="PANTHER" id="PTHR24348:SF22">
    <property type="entry name" value="NON-SPECIFIC SERINE_THREONINE PROTEIN KINASE"/>
    <property type="match status" value="1"/>
</dbReference>
<dbReference type="PANTHER" id="PTHR24348">
    <property type="entry name" value="SERINE/THREONINE-PROTEIN KINASE UNC-51-RELATED"/>
    <property type="match status" value="1"/>
</dbReference>
<dbReference type="Pfam" id="PF12063">
    <property type="entry name" value="ATG1-like_MIT1"/>
    <property type="match status" value="1"/>
</dbReference>
<dbReference type="Pfam" id="PF21127">
    <property type="entry name" value="ATG1-like_MIT2"/>
    <property type="match status" value="1"/>
</dbReference>
<dbReference type="Pfam" id="PF00069">
    <property type="entry name" value="Pkinase"/>
    <property type="match status" value="1"/>
</dbReference>
<dbReference type="SMART" id="SM00220">
    <property type="entry name" value="S_TKc"/>
    <property type="match status" value="1"/>
</dbReference>
<dbReference type="SUPFAM" id="SSF56112">
    <property type="entry name" value="Protein kinase-like (PK-like)"/>
    <property type="match status" value="1"/>
</dbReference>
<dbReference type="PROSITE" id="PS50011">
    <property type="entry name" value="PROTEIN_KINASE_DOM"/>
    <property type="match status" value="1"/>
</dbReference>
<dbReference type="PROSITE" id="PS00108">
    <property type="entry name" value="PROTEIN_KINASE_ST"/>
    <property type="match status" value="1"/>
</dbReference>